<keyword id="KW-1185">Reference proteome</keyword>
<organism>
    <name type="scientific">Brucella abortus (strain 2308)</name>
    <dbReference type="NCBI Taxonomy" id="359391"/>
    <lineage>
        <taxon>Bacteria</taxon>
        <taxon>Pseudomonadati</taxon>
        <taxon>Pseudomonadota</taxon>
        <taxon>Alphaproteobacteria</taxon>
        <taxon>Hyphomicrobiales</taxon>
        <taxon>Brucellaceae</taxon>
        <taxon>Brucella/Ochrobactrum group</taxon>
        <taxon>Brucella</taxon>
    </lineage>
</organism>
<reference key="1">
    <citation type="journal article" date="2005" name="Infect. Immun.">
        <title>Whole-genome analyses of speciation events in pathogenic Brucellae.</title>
        <authorList>
            <person name="Chain P.S."/>
            <person name="Comerci D.J."/>
            <person name="Tolmasky M.E."/>
            <person name="Larimer F.W."/>
            <person name="Malfatti S.A."/>
            <person name="Vergez L.M."/>
            <person name="Aguero F."/>
            <person name="Land M.L."/>
            <person name="Ugalde R.A."/>
            <person name="Garcia E."/>
        </authorList>
    </citation>
    <scope>NUCLEOTIDE SEQUENCE [LARGE SCALE GENOMIC DNA]</scope>
    <source>
        <strain>2308</strain>
    </source>
</reference>
<protein>
    <recommendedName>
        <fullName evidence="1">UPF0301 protein BAB1_0506</fullName>
    </recommendedName>
</protein>
<name>Y506_BRUA2</name>
<feature type="chain" id="PRO_0000258805" description="UPF0301 protein BAB1_0506">
    <location>
        <begin position="1"/>
        <end position="200"/>
    </location>
</feature>
<gene>
    <name type="ordered locus">BAB1_0506</name>
</gene>
<accession>Q2YML2</accession>
<dbReference type="EMBL" id="AM040264">
    <property type="protein sequence ID" value="CAJ10462.1"/>
    <property type="molecule type" value="Genomic_DNA"/>
</dbReference>
<dbReference type="RefSeq" id="WP_002963638.1">
    <property type="nucleotide sequence ID" value="NZ_KN046823.1"/>
</dbReference>
<dbReference type="SMR" id="Q2YML2"/>
<dbReference type="STRING" id="359391.BAB1_0506"/>
<dbReference type="KEGG" id="bmf:BAB1_0506"/>
<dbReference type="PATRIC" id="fig|359391.11.peg.2544"/>
<dbReference type="HOGENOM" id="CLU_057596_1_0_5"/>
<dbReference type="PhylomeDB" id="Q2YML2"/>
<dbReference type="Proteomes" id="UP000002719">
    <property type="component" value="Chromosome I"/>
</dbReference>
<dbReference type="GO" id="GO:0005829">
    <property type="term" value="C:cytosol"/>
    <property type="evidence" value="ECO:0007669"/>
    <property type="project" value="TreeGrafter"/>
</dbReference>
<dbReference type="Gene3D" id="3.40.1740.10">
    <property type="entry name" value="VC0467-like"/>
    <property type="match status" value="1"/>
</dbReference>
<dbReference type="HAMAP" id="MF_00758">
    <property type="entry name" value="UPF0301"/>
    <property type="match status" value="1"/>
</dbReference>
<dbReference type="InterPro" id="IPR003774">
    <property type="entry name" value="AlgH-like"/>
</dbReference>
<dbReference type="NCBIfam" id="NF001268">
    <property type="entry name" value="PRK00228.1-4"/>
    <property type="match status" value="1"/>
</dbReference>
<dbReference type="PANTHER" id="PTHR30327">
    <property type="entry name" value="UNCHARACTERIZED PROTEIN YQGE"/>
    <property type="match status" value="1"/>
</dbReference>
<dbReference type="PANTHER" id="PTHR30327:SF1">
    <property type="entry name" value="UPF0301 PROTEIN YQGE"/>
    <property type="match status" value="1"/>
</dbReference>
<dbReference type="Pfam" id="PF02622">
    <property type="entry name" value="DUF179"/>
    <property type="match status" value="1"/>
</dbReference>
<dbReference type="SUPFAM" id="SSF143456">
    <property type="entry name" value="VC0467-like"/>
    <property type="match status" value="1"/>
</dbReference>
<proteinExistence type="inferred from homology"/>
<comment type="similarity">
    <text evidence="1">Belongs to the UPF0301 (AlgH) family.</text>
</comment>
<sequence length="200" mass="22050">MTTHRKPSQEQGFLNGQFLLAMPGMSDERFARSVVYICAHSDEGAMGFIINQLQPVQFPDLLRQIGVIGEEDLIILPDRAQHMVVRNGGPVDRTRGFVLHSDDYMVDSTMPVSDDVCLTATVDILRAIYGGGGPERALMALGYSGWAPGQLEMEVAENGWLTCDAPLDMLFDSDIEGKYSRLMLHMGIDMSRLVFDAGHA</sequence>
<evidence type="ECO:0000255" key="1">
    <source>
        <dbReference type="HAMAP-Rule" id="MF_00758"/>
    </source>
</evidence>